<reference key="1">
    <citation type="journal article" date="2004" name="Genome Res.">
        <title>The status, quality, and expansion of the NIH full-length cDNA project: the Mammalian Gene Collection (MGC).</title>
        <authorList>
            <consortium name="The MGC Project Team"/>
        </authorList>
    </citation>
    <scope>NUCLEOTIDE SEQUENCE [LARGE SCALE MRNA] (ISOFORMS 2 AND 3)</scope>
    <scope>NUCLEOTIDE SEQUENCE [LARGE SCALE MRNA] OF 174-963 (ISOFORM 1)</scope>
    <source>
        <tissue>Brain</tissue>
        <tissue>Muscle</tissue>
        <tissue>Ovary</tissue>
        <tissue>Uterus</tissue>
    </source>
</reference>
<reference key="2">
    <citation type="submission" date="1999-07" db="EMBL/GenBank/DDBJ databases">
        <authorList>
            <person name="Sheng H."/>
            <person name="Qin B.M."/>
            <person name="Liu Y.Q."/>
            <person name="Zhao B."/>
            <person name="Liu B."/>
            <person name="Wang X.Y."/>
            <person name="Zhang Q."/>
            <person name="Song L."/>
            <person name="Gao Y."/>
            <person name="Zhang C.L."/>
            <person name="Ye J."/>
            <person name="Ji X.J."/>
            <person name="Liu B.H."/>
            <person name="Lu H."/>
            <person name="Xu H.S."/>
            <person name="Chen J.Z."/>
            <person name="Cai M.Q."/>
            <person name="Zheng W.Y."/>
            <person name="Teng C.Y."/>
            <person name="Liu Q."/>
            <person name="Yu L.T."/>
            <person name="Lin J."/>
            <person name="Gong J."/>
            <person name="Zhang A.M."/>
            <person name="Gao R.L."/>
            <person name="Hui R.T."/>
        </authorList>
    </citation>
    <scope>NUCLEOTIDE SEQUENCE [LARGE SCALE MRNA] OF 641-963 (ISOFORM 1)</scope>
    <source>
        <tissue>Aorta</tissue>
    </source>
</reference>
<reference key="3">
    <citation type="journal article" date="2005" name="Cell">
        <title>Integrator, a multiprotein mediator of small nuclear RNA processing, associates with the C-terminal repeat of RNA polymerase II.</title>
        <authorList>
            <person name="Baillat D."/>
            <person name="Hakimi M.-A."/>
            <person name="Naeaer A.M."/>
            <person name="Shilatifard A."/>
            <person name="Cooch N."/>
            <person name="Shiekhattar R."/>
        </authorList>
    </citation>
    <scope>FUNCTION</scope>
    <scope>IDENTIFICATION (ISOFORM 1)</scope>
    <scope>IDENTIFICATION BY MASS SPECTROMETRY</scope>
    <scope>IDENTIFICATION IN THE INTEGRATOR COMPLEX</scope>
</reference>
<reference key="4">
    <citation type="journal article" date="2013" name="J. Proteome Res.">
        <title>Toward a comprehensive characterization of a human cancer cell phosphoproteome.</title>
        <authorList>
            <person name="Zhou H."/>
            <person name="Di Palma S."/>
            <person name="Preisinger C."/>
            <person name="Peng M."/>
            <person name="Polat A.N."/>
            <person name="Heck A.J."/>
            <person name="Mohammed S."/>
        </authorList>
    </citation>
    <scope>IDENTIFICATION BY MASS SPECTROMETRY [LARGE SCALE ANALYSIS]</scope>
    <source>
        <tissue>Erythroleukemia</tissue>
    </source>
</reference>
<reference key="5">
    <citation type="journal article" date="2013" name="Mol. Biol. Cell">
        <title>Nuclear-localized Asunder regulates cytoplasmic dynein localization via its role in the integrator complex.</title>
        <authorList>
            <person name="Jodoin J.N."/>
            <person name="Sitaram P."/>
            <person name="Albrecht T.R."/>
            <person name="May S.B."/>
            <person name="Shboul M."/>
            <person name="Lee E."/>
            <person name="Reversade B."/>
            <person name="Wagner E.J."/>
            <person name="Lee L.A."/>
        </authorList>
    </citation>
    <scope>FUNCTION</scope>
    <scope>SUBCELLULAR LOCATION</scope>
</reference>
<reference key="6">
    <citation type="journal article" date="2014" name="Nat. Struct. Mol. Biol.">
        <title>Uncovering global SUMOylation signaling networks in a site-specific manner.</title>
        <authorList>
            <person name="Hendriks I.A."/>
            <person name="D'Souza R.C."/>
            <person name="Yang B."/>
            <person name="Verlaan-de Vries M."/>
            <person name="Mann M."/>
            <person name="Vertegaal A.C."/>
        </authorList>
    </citation>
    <scope>SUMOYLATION [LARGE SCALE ANALYSIS] AT LYS-791</scope>
    <scope>IDENTIFICATION BY MASS SPECTROMETRY [LARGE SCALE ANALYSIS]</scope>
</reference>
<reference key="7">
    <citation type="journal article" date="2014" name="Proc. Natl. Acad. Sci. U.S.A.">
        <title>Mapping of SUMO sites and analysis of SUMOylation changes induced by external stimuli.</title>
        <authorList>
            <person name="Impens F."/>
            <person name="Radoshevich L."/>
            <person name="Cossart P."/>
            <person name="Ribet D."/>
        </authorList>
    </citation>
    <scope>SUMOYLATION [LARGE SCALE ANALYSIS] AT LYS-791</scope>
    <scope>IDENTIFICATION BY MASS SPECTROMETRY [LARGE SCALE ANALYSIS]</scope>
</reference>
<reference key="8">
    <citation type="journal article" date="2015" name="Mol. Cell. Proteomics">
        <title>System-wide analysis of SUMOylation dynamics in response to replication stress reveals novel small ubiquitin-like modified target proteins and acceptor lysines relevant for genome stability.</title>
        <authorList>
            <person name="Xiao Z."/>
            <person name="Chang J.G."/>
            <person name="Hendriks I.A."/>
            <person name="Sigurdsson J.O."/>
            <person name="Olsen J.V."/>
            <person name="Vertegaal A.C."/>
        </authorList>
    </citation>
    <scope>SUMOYLATION [LARGE SCALE ANALYSIS] AT LYS-791</scope>
    <scope>IDENTIFICATION BY MASS SPECTROMETRY [LARGE SCALE ANALYSIS]</scope>
</reference>
<reference key="9">
    <citation type="journal article" date="2017" name="Nat. Struct. Mol. Biol.">
        <title>Site-specific mapping of the human SUMO proteome reveals co-modification with phosphorylation.</title>
        <authorList>
            <person name="Hendriks I.A."/>
            <person name="Lyon D."/>
            <person name="Young C."/>
            <person name="Jensen L.J."/>
            <person name="Vertegaal A.C."/>
            <person name="Nielsen M.L."/>
        </authorList>
    </citation>
    <scope>SUMOYLATION [LARGE SCALE ANALYSIS] AT LYS-791</scope>
    <scope>IDENTIFICATION BY MASS SPECTROMETRY [LARGE SCALE ANALYSIS]</scope>
</reference>
<reference key="10">
    <citation type="journal article" date="2018" name="Nucleic Acids Res.">
        <title>Integrator subunit 4 is a 'Symplekin-like' scaffold that associates with INTS9/11 to form the Integrator cleavage module.</title>
        <authorList>
            <person name="Albrecht T.R."/>
            <person name="Shevtsov S.P."/>
            <person name="Wu Y."/>
            <person name="Mascibroda L.G."/>
            <person name="Peart N.J."/>
            <person name="Huang K.L."/>
            <person name="Sawyer I.A."/>
            <person name="Tong L."/>
            <person name="Dundr M."/>
            <person name="Wagner E.J."/>
        </authorList>
    </citation>
    <scope>FUNCTION</scope>
    <scope>SUBCELLULAR LOCATION</scope>
    <scope>IDENTIFICATION IN THE INTEGRATOR COMPLEX</scope>
</reference>
<reference key="11">
    <citation type="journal article" date="2024" name="Mol. Cell">
        <title>Cytoplasmic binding partners of the Integrator endonuclease INTS11 and its paralog CPSF73 are required for their nuclear function.</title>
        <authorList>
            <person name="Lin M.H."/>
            <person name="Jensen M.K."/>
            <person name="Elrod N.D."/>
            <person name="Chu H.F."/>
            <person name="Haseley M."/>
            <person name="Beam A.C."/>
            <person name="Huang K.L."/>
            <person name="Chiang W."/>
            <person name="Russell W.K."/>
            <person name="Williams K."/>
            <person name="Proschel C."/>
            <person name="Wagner E.J."/>
            <person name="Tong L."/>
        </authorList>
    </citation>
    <scope>IDENTIFICATION IN THE INTEGRATOR COMPLEX</scope>
    <scope>SUBCELLULAR LOCATION</scope>
</reference>
<reference evidence="18" key="12">
    <citation type="journal article" date="2020" name="Science">
        <title>Identification of Integrator-PP2A complex (INTAC), an RNA polymerase II phosphatase.</title>
        <authorList>
            <person name="Zheng H."/>
            <person name="Qi Y."/>
            <person name="Hu S."/>
            <person name="Cao X."/>
            <person name="Xu C."/>
            <person name="Yin Z."/>
            <person name="Chen X."/>
            <person name="Li Y."/>
            <person name="Liu W."/>
            <person name="Li J."/>
            <person name="Wang J."/>
            <person name="Wei G."/>
            <person name="Liang K."/>
            <person name="Chen F.X."/>
            <person name="Xu Y."/>
        </authorList>
    </citation>
    <scope>STRUCTURE BY ELECTRON MICROSCOPY (3.50 ANGSTROMS) OF INTAC COMPLEX</scope>
    <scope>FUNCTION</scope>
    <scope>IDENTIFICATION IN THE INTAC COMPLEX</scope>
</reference>
<reference evidence="16 17" key="13">
    <citation type="journal article" date="2021" name="Mol. Cell">
        <title>Structure of the catalytic core of the Integrator complex.</title>
        <authorList>
            <person name="Pfleiderer M.M."/>
            <person name="Galej W.P."/>
        </authorList>
    </citation>
    <scope>STRUCTURE BY ELECTRON MICROSCOPY (3.56 ANGSTROMS) IN COMPLEX WITH INTS9 AND INTS11</scope>
    <scope>FUNCTION</scope>
    <scope>IDENTIFICATION IN THE INTEGRATOR COMPLEX</scope>
    <scope>MUTAGENESIS OF 164-HIS--ARG-167 AND ARG-210</scope>
</reference>
<reference evidence="19" key="14">
    <citation type="journal article" date="2021" name="Science">
        <title>Structural basis of Integrator-mediated transcription regulation.</title>
        <authorList>
            <person name="Fianu I."/>
            <person name="Chen Y."/>
            <person name="Dienemann C."/>
            <person name="Dybkov O."/>
            <person name="Linden A."/>
            <person name="Urlaub H."/>
            <person name="Cramer P."/>
        </authorList>
    </citation>
    <scope>STRUCTURE BY ELECTRON MICROSCOPY (3.60 ANGSTROMS) OF INTEGRATOR COMPLEX</scope>
    <scope>IDENTIFICATION IN THE INTEGRATOR COMPLEX</scope>
</reference>
<reference evidence="20" key="15">
    <citation type="journal article" date="2023" name="Protein Cell">
        <title>Structural basis of INTAC-regulated transcription.</title>
        <authorList>
            <person name="Zheng H."/>
            <person name="Jin Q."/>
            <person name="Wang X."/>
            <person name="Qi Y."/>
            <person name="Liu W."/>
            <person name="Ren Y."/>
            <person name="Zhao D."/>
            <person name="Xavier Chen F."/>
            <person name="Cheng J."/>
            <person name="Chen X."/>
            <person name="Xu Y."/>
        </authorList>
    </citation>
    <scope>STRUCTURE BY ELECTRON MICROSCOPY (4.18 ANGSTROMS) OF INTAC COMPLEX</scope>
</reference>
<reference evidence="21" key="16">
    <citation type="journal article" date="2024" name="Mol. Cell">
        <title>Assembly mechanism of Integrator's RNA cleavage module.</title>
        <authorList>
            <person name="Sabath K."/>
            <person name="Qiu C."/>
            <person name="Jonas S."/>
        </authorList>
    </citation>
    <scope>STRUCTURE BY ELECTRON MICROSCOPY (3.90 ANGSTROMS) IN COMPLEX WITH BRAT1; INTS9 AND INTS11</scope>
    <scope>INTERACTION WITH BRAT1</scope>
    <scope>SUBCELLULAR LOCATION</scope>
</reference>
<reference evidence="22 23 24" key="17">
    <citation type="journal article" date="2024" name="Nature">
        <title>Structural basis of Integrator-dependent RNA polymerase II termination.</title>
        <authorList>
            <person name="Fianu I."/>
            <person name="Ochmann M."/>
            <person name="Walshe J.L."/>
            <person name="Dybkov O."/>
            <person name="Cruz J.N."/>
            <person name="Urlaub H."/>
            <person name="Cramer P."/>
        </authorList>
    </citation>
    <scope>STRUCTURE BY ELECTRON MICROSCOPY (3.10 ANGSTROMS) OF INTAC COMPLEX</scope>
    <scope>FUNCTION</scope>
    <scope>IDENTIFICATION IN THE INTAC COMPLEX</scope>
</reference>
<organism>
    <name type="scientific">Homo sapiens</name>
    <name type="common">Human</name>
    <dbReference type="NCBI Taxonomy" id="9606"/>
    <lineage>
        <taxon>Eukaryota</taxon>
        <taxon>Metazoa</taxon>
        <taxon>Chordata</taxon>
        <taxon>Craniata</taxon>
        <taxon>Vertebrata</taxon>
        <taxon>Euteleostomi</taxon>
        <taxon>Mammalia</taxon>
        <taxon>Eutheria</taxon>
        <taxon>Euarchontoglires</taxon>
        <taxon>Primates</taxon>
        <taxon>Haplorrhini</taxon>
        <taxon>Catarrhini</taxon>
        <taxon>Hominidae</taxon>
        <taxon>Homo</taxon>
    </lineage>
</organism>
<accession>Q96HW7</accession>
<accession>Q2YD62</accession>
<accession>Q6PJG4</accession>
<accession>Q7Z4E7</accession>
<accession>Q96G32</accession>
<accession>Q96GA1</accession>
<accession>Q9BRC0</accession>
<evidence type="ECO:0000250" key="1">
    <source>
        <dbReference type="UniProtKB" id="Q8CIM8"/>
    </source>
</evidence>
<evidence type="ECO:0000269" key="2">
    <source>
    </source>
</evidence>
<evidence type="ECO:0000269" key="3">
    <source>
    </source>
</evidence>
<evidence type="ECO:0000269" key="4">
    <source>
    </source>
</evidence>
<evidence type="ECO:0000269" key="5">
    <source>
    </source>
</evidence>
<evidence type="ECO:0000269" key="6">
    <source>
    </source>
</evidence>
<evidence type="ECO:0000269" key="7">
    <source>
    </source>
</evidence>
<evidence type="ECO:0000269" key="8">
    <source>
    </source>
</evidence>
<evidence type="ECO:0000269" key="9">
    <source>
    </source>
</evidence>
<evidence type="ECO:0000269" key="10">
    <source>
    </source>
</evidence>
<evidence type="ECO:0000269" key="11">
    <source>
    </source>
</evidence>
<evidence type="ECO:0000303" key="12">
    <source>
    </source>
</evidence>
<evidence type="ECO:0000303" key="13">
    <source>
    </source>
</evidence>
<evidence type="ECO:0000303" key="14">
    <source>
    </source>
</evidence>
<evidence type="ECO:0000305" key="15"/>
<evidence type="ECO:0007744" key="16">
    <source>
        <dbReference type="PDB" id="7BFP"/>
    </source>
</evidence>
<evidence type="ECO:0007744" key="17">
    <source>
        <dbReference type="PDB" id="7BFQ"/>
    </source>
</evidence>
<evidence type="ECO:0007744" key="18">
    <source>
        <dbReference type="PDB" id="7CUN"/>
    </source>
</evidence>
<evidence type="ECO:0007744" key="19">
    <source>
        <dbReference type="PDB" id="7PKS"/>
    </source>
</evidence>
<evidence type="ECO:0007744" key="20">
    <source>
        <dbReference type="PDB" id="7YCX"/>
    </source>
</evidence>
<evidence type="ECO:0007744" key="21">
    <source>
        <dbReference type="PDB" id="8R2D"/>
    </source>
</evidence>
<evidence type="ECO:0007744" key="22">
    <source>
        <dbReference type="PDB" id="8RBX"/>
    </source>
</evidence>
<evidence type="ECO:0007744" key="23">
    <source>
        <dbReference type="PDB" id="8RBZ"/>
    </source>
</evidence>
<evidence type="ECO:0007744" key="24">
    <source>
        <dbReference type="PDB" id="8RC4"/>
    </source>
</evidence>
<evidence type="ECO:0007744" key="25">
    <source>
    </source>
</evidence>
<evidence type="ECO:0007744" key="26">
    <source>
    </source>
</evidence>
<evidence type="ECO:0007744" key="27">
    <source>
    </source>
</evidence>
<evidence type="ECO:0007744" key="28">
    <source>
    </source>
</evidence>
<evidence type="ECO:0007829" key="29">
    <source>
        <dbReference type="PDB" id="7CUN"/>
    </source>
</evidence>
<evidence type="ECO:0007829" key="30">
    <source>
        <dbReference type="PDB" id="8RC4"/>
    </source>
</evidence>
<name>INT4_HUMAN</name>
<dbReference type="EMBL" id="BC006369">
    <property type="protein sequence ID" value="AAH06369.1"/>
    <property type="molecule type" value="mRNA"/>
</dbReference>
<dbReference type="EMBL" id="BC008013">
    <property type="protein sequence ID" value="AAH08013.1"/>
    <property type="molecule type" value="mRNA"/>
</dbReference>
<dbReference type="EMBL" id="BC009859">
    <property type="protein sequence ID" value="AAH09859.2"/>
    <property type="molecule type" value="mRNA"/>
</dbReference>
<dbReference type="EMBL" id="BC009995">
    <property type="protein sequence ID" value="AAH09995.1"/>
    <property type="molecule type" value="mRNA"/>
</dbReference>
<dbReference type="EMBL" id="BC015664">
    <property type="protein sequence ID" value="AAH15664.1"/>
    <property type="molecule type" value="mRNA"/>
</dbReference>
<dbReference type="EMBL" id="AF172822">
    <property type="protein sequence ID" value="AAQ13616.1"/>
    <property type="status" value="ALT_SEQ"/>
    <property type="molecule type" value="mRNA"/>
</dbReference>
<dbReference type="EMBL" id="BK005723">
    <property type="protein sequence ID" value="DAA05723.1"/>
    <property type="molecule type" value="mRNA"/>
</dbReference>
<dbReference type="CCDS" id="CCDS31644.1">
    <molecule id="Q96HW7-1"/>
</dbReference>
<dbReference type="RefSeq" id="NP_291025.3">
    <molecule id="Q96HW7-1"/>
    <property type="nucleotide sequence ID" value="NM_033547.3"/>
</dbReference>
<dbReference type="PDB" id="7BFP">
    <property type="method" value="EM"/>
    <property type="resolution" value="3.50 A"/>
    <property type="chains" value="C=1-963"/>
</dbReference>
<dbReference type="PDB" id="7BFQ">
    <property type="method" value="EM"/>
    <property type="resolution" value="3.50 A"/>
    <property type="chains" value="C=1-963"/>
</dbReference>
<dbReference type="PDB" id="7CUN">
    <property type="method" value="EM"/>
    <property type="resolution" value="3.50 A"/>
    <property type="chains" value="D=1-963"/>
</dbReference>
<dbReference type="PDB" id="7PKS">
    <property type="method" value="EM"/>
    <property type="resolution" value="3.60 A"/>
    <property type="chains" value="d=1-963"/>
</dbReference>
<dbReference type="PDB" id="7YCX">
    <property type="method" value="EM"/>
    <property type="resolution" value="4.18 A"/>
    <property type="chains" value="D=1-963"/>
</dbReference>
<dbReference type="PDB" id="8R2D">
    <property type="method" value="EM"/>
    <property type="resolution" value="3.90 A"/>
    <property type="chains" value="D=1-963"/>
</dbReference>
<dbReference type="PDB" id="8RBX">
    <property type="method" value="EM"/>
    <property type="resolution" value="4.10 A"/>
    <property type="chains" value="d=1-963"/>
</dbReference>
<dbReference type="PDB" id="8RBZ">
    <property type="method" value="EM"/>
    <property type="resolution" value="3.70 A"/>
    <property type="chains" value="d=1-963"/>
</dbReference>
<dbReference type="PDB" id="8RC4">
    <property type="method" value="EM"/>
    <property type="resolution" value="3.10 A"/>
    <property type="chains" value="d=1-963"/>
</dbReference>
<dbReference type="PDB" id="8YJB">
    <property type="method" value="EM"/>
    <property type="resolution" value="4.10 A"/>
    <property type="chains" value="D=1-963"/>
</dbReference>
<dbReference type="PDBsum" id="7BFP"/>
<dbReference type="PDBsum" id="7BFQ"/>
<dbReference type="PDBsum" id="7CUN"/>
<dbReference type="PDBsum" id="7PKS"/>
<dbReference type="PDBsum" id="7YCX"/>
<dbReference type="PDBsum" id="8R2D"/>
<dbReference type="PDBsum" id="8RBX"/>
<dbReference type="PDBsum" id="8RBZ"/>
<dbReference type="PDBsum" id="8RC4"/>
<dbReference type="PDBsum" id="8YJB"/>
<dbReference type="EMDB" id="EMD-12165"/>
<dbReference type="EMDB" id="EMD-12166"/>
<dbReference type="EMDB" id="EMD-13479"/>
<dbReference type="EMDB" id="EMD-18839"/>
<dbReference type="EMDB" id="EMD-19038"/>
<dbReference type="EMDB" id="EMD-19040"/>
<dbReference type="EMDB" id="EMD-19047"/>
<dbReference type="EMDB" id="EMD-30473"/>
<dbReference type="EMDB" id="EMD-33741"/>
<dbReference type="EMDB" id="EMD-39338"/>
<dbReference type="SMR" id="Q96HW7"/>
<dbReference type="BioGRID" id="124909">
    <property type="interactions" value="125"/>
</dbReference>
<dbReference type="ComplexPortal" id="CPX-6441">
    <property type="entry name" value="Integrator complex"/>
</dbReference>
<dbReference type="CORUM" id="Q96HW7"/>
<dbReference type="FunCoup" id="Q96HW7">
    <property type="interactions" value="5091"/>
</dbReference>
<dbReference type="IntAct" id="Q96HW7">
    <property type="interactions" value="84"/>
</dbReference>
<dbReference type="MINT" id="Q96HW7"/>
<dbReference type="STRING" id="9606.ENSP00000434466"/>
<dbReference type="GlyGen" id="Q96HW7">
    <property type="glycosylation" value="3 sites, 1 N-linked glycan (1 site), 1 O-linked glycan (2 sites)"/>
</dbReference>
<dbReference type="iPTMnet" id="Q96HW7"/>
<dbReference type="MetOSite" id="Q96HW7"/>
<dbReference type="PhosphoSitePlus" id="Q96HW7"/>
<dbReference type="SwissPalm" id="Q96HW7"/>
<dbReference type="BioMuta" id="INTS4"/>
<dbReference type="DMDM" id="118572560"/>
<dbReference type="jPOST" id="Q96HW7"/>
<dbReference type="MassIVE" id="Q96HW7"/>
<dbReference type="PaxDb" id="9606-ENSP00000434466"/>
<dbReference type="PeptideAtlas" id="Q96HW7"/>
<dbReference type="ProteomicsDB" id="76789">
    <molecule id="Q96HW7-1"/>
</dbReference>
<dbReference type="ProteomicsDB" id="76790">
    <molecule id="Q96HW7-2"/>
</dbReference>
<dbReference type="ProteomicsDB" id="76791">
    <molecule id="Q96HW7-3"/>
</dbReference>
<dbReference type="Pumba" id="Q96HW7"/>
<dbReference type="Antibodypedia" id="31280">
    <property type="antibodies" value="132 antibodies from 27 providers"/>
</dbReference>
<dbReference type="DNASU" id="92105"/>
<dbReference type="Ensembl" id="ENST00000525931.2">
    <molecule id="Q96HW7-2"/>
    <property type="protein sequence ID" value="ENSP00000511688.1"/>
    <property type="gene ID" value="ENSG00000149262.19"/>
</dbReference>
<dbReference type="Ensembl" id="ENST00000529807.5">
    <molecule id="Q96HW7-2"/>
    <property type="protein sequence ID" value="ENSP00000433644.1"/>
    <property type="gene ID" value="ENSG00000149262.19"/>
</dbReference>
<dbReference type="Ensembl" id="ENST00000534064.6">
    <molecule id="Q96HW7-1"/>
    <property type="protein sequence ID" value="ENSP00000434466.1"/>
    <property type="gene ID" value="ENSG00000149262.19"/>
</dbReference>
<dbReference type="Ensembl" id="ENST00000695100.1">
    <molecule id="Q96HW7-2"/>
    <property type="protein sequence ID" value="ENSP00000511691.1"/>
    <property type="gene ID" value="ENSG00000149262.19"/>
</dbReference>
<dbReference type="GeneID" id="92105"/>
<dbReference type="KEGG" id="hsa:92105"/>
<dbReference type="MANE-Select" id="ENST00000534064.6">
    <property type="protein sequence ID" value="ENSP00000434466.1"/>
    <property type="RefSeq nucleotide sequence ID" value="NM_033547.4"/>
    <property type="RefSeq protein sequence ID" value="NP_291025.3"/>
</dbReference>
<dbReference type="UCSC" id="uc001oys.4">
    <molecule id="Q96HW7-1"/>
    <property type="organism name" value="human"/>
</dbReference>
<dbReference type="AGR" id="HGNC:25048"/>
<dbReference type="CTD" id="92105"/>
<dbReference type="DisGeNET" id="92105"/>
<dbReference type="GeneCards" id="INTS4"/>
<dbReference type="HGNC" id="HGNC:25048">
    <property type="gene designation" value="INTS4"/>
</dbReference>
<dbReference type="HPA" id="ENSG00000149262">
    <property type="expression patterns" value="Low tissue specificity"/>
</dbReference>
<dbReference type="MIM" id="611348">
    <property type="type" value="gene"/>
</dbReference>
<dbReference type="neXtProt" id="NX_Q96HW7"/>
<dbReference type="OpenTargets" id="ENSG00000149262"/>
<dbReference type="PharmGKB" id="PA144596421"/>
<dbReference type="VEuPathDB" id="HostDB:ENSG00000149262"/>
<dbReference type="eggNOG" id="KOG2259">
    <property type="taxonomic scope" value="Eukaryota"/>
</dbReference>
<dbReference type="GeneTree" id="ENSGT00390000010128"/>
<dbReference type="HOGENOM" id="CLU_012910_1_0_1"/>
<dbReference type="InParanoid" id="Q96HW7"/>
<dbReference type="OMA" id="GNRHPDY"/>
<dbReference type="OrthoDB" id="18190at2759"/>
<dbReference type="PAN-GO" id="Q96HW7">
    <property type="GO annotations" value="2 GO annotations based on evolutionary models"/>
</dbReference>
<dbReference type="PhylomeDB" id="Q96HW7"/>
<dbReference type="TreeFam" id="TF315047"/>
<dbReference type="PathwayCommons" id="Q96HW7"/>
<dbReference type="Reactome" id="R-HSA-6807505">
    <property type="pathway name" value="RNA polymerase II transcribes snRNA genes"/>
</dbReference>
<dbReference type="SignaLink" id="Q96HW7"/>
<dbReference type="SIGNOR" id="Q96HW7"/>
<dbReference type="BioGRID-ORCS" id="92105">
    <property type="hits" value="767 hits in 1169 CRISPR screens"/>
</dbReference>
<dbReference type="CD-CODE" id="6F24707C">
    <property type="entry name" value="Cajal body"/>
</dbReference>
<dbReference type="ChiTaRS" id="INTS4">
    <property type="organism name" value="human"/>
</dbReference>
<dbReference type="GenomeRNAi" id="92105"/>
<dbReference type="Pharos" id="Q96HW7">
    <property type="development level" value="Tbio"/>
</dbReference>
<dbReference type="PRO" id="PR:Q96HW7"/>
<dbReference type="Proteomes" id="UP000005640">
    <property type="component" value="Chromosome 11"/>
</dbReference>
<dbReference type="RNAct" id="Q96HW7">
    <property type="molecule type" value="protein"/>
</dbReference>
<dbReference type="Bgee" id="ENSG00000149262">
    <property type="expression patterns" value="Expressed in buccal mucosa cell and 180 other cell types or tissues"/>
</dbReference>
<dbReference type="ExpressionAtlas" id="Q96HW7">
    <property type="expression patterns" value="baseline and differential"/>
</dbReference>
<dbReference type="GO" id="GO:0005737">
    <property type="term" value="C:cytoplasm"/>
    <property type="evidence" value="ECO:0000314"/>
    <property type="project" value="UniProtKB"/>
</dbReference>
<dbReference type="GO" id="GO:0160232">
    <property type="term" value="C:INTAC complex"/>
    <property type="evidence" value="ECO:0000314"/>
    <property type="project" value="UniProtKB"/>
</dbReference>
<dbReference type="GO" id="GO:0032039">
    <property type="term" value="C:integrator complex"/>
    <property type="evidence" value="ECO:0000314"/>
    <property type="project" value="UniProtKB"/>
</dbReference>
<dbReference type="GO" id="GO:0005730">
    <property type="term" value="C:nucleolus"/>
    <property type="evidence" value="ECO:0000314"/>
    <property type="project" value="HPA"/>
</dbReference>
<dbReference type="GO" id="GO:0005654">
    <property type="term" value="C:nucleoplasm"/>
    <property type="evidence" value="ECO:0000304"/>
    <property type="project" value="Reactome"/>
</dbReference>
<dbReference type="GO" id="GO:0005634">
    <property type="term" value="C:nucleus"/>
    <property type="evidence" value="ECO:0000314"/>
    <property type="project" value="UniProtKB"/>
</dbReference>
<dbReference type="GO" id="GO:0030674">
    <property type="term" value="F:protein-macromolecule adaptor activity"/>
    <property type="evidence" value="ECO:0000314"/>
    <property type="project" value="UniProtKB"/>
</dbReference>
<dbReference type="GO" id="GO:0034243">
    <property type="term" value="P:regulation of transcription elongation by RNA polymerase II"/>
    <property type="evidence" value="ECO:0000303"/>
    <property type="project" value="ComplexPortal"/>
</dbReference>
<dbReference type="GO" id="GO:0160240">
    <property type="term" value="P:RNA polymerase II transcription initiation surveillance"/>
    <property type="evidence" value="ECO:0000314"/>
    <property type="project" value="UniProtKB"/>
</dbReference>
<dbReference type="GO" id="GO:0016180">
    <property type="term" value="P:snRNA processing"/>
    <property type="evidence" value="ECO:0000314"/>
    <property type="project" value="HGNC-UCL"/>
</dbReference>
<dbReference type="FunFam" id="1.25.10.10:FF:000134">
    <property type="entry name" value="Integrator complex subunit 4"/>
    <property type="match status" value="1"/>
</dbReference>
<dbReference type="FunFam" id="1.25.10.10:FF:000634">
    <property type="entry name" value="integrator complex subunit 4 isoform X2"/>
    <property type="match status" value="1"/>
</dbReference>
<dbReference type="Gene3D" id="1.25.10.10">
    <property type="entry name" value="Leucine-rich Repeat Variant"/>
    <property type="match status" value="3"/>
</dbReference>
<dbReference type="InterPro" id="IPR011989">
    <property type="entry name" value="ARM-like"/>
</dbReference>
<dbReference type="InterPro" id="IPR016024">
    <property type="entry name" value="ARM-type_fold"/>
</dbReference>
<dbReference type="InterPro" id="IPR056235">
    <property type="entry name" value="INTS4_8HBD"/>
</dbReference>
<dbReference type="PANTHER" id="PTHR20938">
    <property type="entry name" value="INTEGRATOR COMPLEX SUBUNIT 4"/>
    <property type="match status" value="1"/>
</dbReference>
<dbReference type="PANTHER" id="PTHR20938:SF0">
    <property type="entry name" value="INTEGRATOR COMPLEX SUBUNIT 4"/>
    <property type="match status" value="1"/>
</dbReference>
<dbReference type="Pfam" id="PF13646">
    <property type="entry name" value="HEAT_2"/>
    <property type="match status" value="1"/>
</dbReference>
<dbReference type="Pfam" id="PF24493">
    <property type="entry name" value="INTS4_8HBD"/>
    <property type="match status" value="1"/>
</dbReference>
<dbReference type="Pfam" id="PF25458">
    <property type="entry name" value="INTS4_C"/>
    <property type="match status" value="1"/>
</dbReference>
<dbReference type="Pfam" id="PF20168">
    <property type="entry name" value="PDS5"/>
    <property type="match status" value="1"/>
</dbReference>
<dbReference type="SUPFAM" id="SSF48371">
    <property type="entry name" value="ARM repeat"/>
    <property type="match status" value="1"/>
</dbReference>
<proteinExistence type="evidence at protein level"/>
<protein>
    <recommendedName>
        <fullName evidence="15">Integrator complex subunit 4</fullName>
        <shortName>Int4</shortName>
    </recommendedName>
</protein>
<gene>
    <name evidence="13 14" type="primary">INTS4</name>
    <name type="ORF">MSTP093</name>
</gene>
<feature type="chain" id="PRO_0000259538" description="Integrator complex subunit 4">
    <location>
        <begin position="1"/>
        <end position="963"/>
    </location>
</feature>
<feature type="repeat" description="HEAT 1">
    <location>
        <begin position="66"/>
        <end position="105"/>
    </location>
</feature>
<feature type="repeat" description="HEAT 2">
    <location>
        <begin position="145"/>
        <end position="183"/>
    </location>
</feature>
<feature type="repeat" description="HEAT 3">
    <location>
        <begin position="190"/>
        <end position="228"/>
    </location>
</feature>
<feature type="repeat" description="HEAT 4">
    <location>
        <begin position="229"/>
        <end position="263"/>
    </location>
</feature>
<feature type="repeat" description="HEAT 5">
    <location>
        <begin position="277"/>
        <end position="313"/>
    </location>
</feature>
<feature type="repeat" description="HEAT 6">
    <location>
        <begin position="369"/>
        <end position="405"/>
    </location>
</feature>
<feature type="repeat" description="HEAT 7">
    <location>
        <begin position="406"/>
        <end position="444"/>
    </location>
</feature>
<feature type="repeat" description="HEAT 8">
    <location>
        <begin position="446"/>
        <end position="484"/>
    </location>
</feature>
<feature type="modified residue" description="N6-acetyllysine" evidence="1">
    <location>
        <position position="26"/>
    </location>
</feature>
<feature type="cross-link" description="Glycyl lysine isopeptide (Lys-Gly) (interchain with G-Cter in SUMO1); alternate" evidence="25">
    <location>
        <position position="791"/>
    </location>
</feature>
<feature type="cross-link" description="Glycyl lysine isopeptide (Lys-Gly) (interchain with G-Cter in SUMO2); alternate" evidence="25 26 27 28">
    <location>
        <position position="791"/>
    </location>
</feature>
<feature type="splice variant" id="VSP_021448" description="In isoform 3." evidence="12">
    <location>
        <begin position="1"/>
        <end position="148"/>
    </location>
</feature>
<feature type="splice variant" id="VSP_021449" description="In isoform 3." evidence="12">
    <original>MRLVDVAC</original>
    <variation>MPSTSCRM</variation>
    <location>
        <begin position="149"/>
        <end position="156"/>
    </location>
</feature>
<feature type="splice variant" id="VSP_021450" description="In isoform 2." evidence="12">
    <location>
        <begin position="506"/>
        <end position="963"/>
    </location>
</feature>
<feature type="splice variant" id="VSP_021452" description="In isoform 3." evidence="12">
    <original>DLQRLGELQSELAGVADF</original>
    <variation>VEVSPWWPGWSQTPELK</variation>
    <location>
        <begin position="642"/>
        <end position="659"/>
    </location>
</feature>
<feature type="splice variant" id="VSP_021453" description="In isoform 3." evidence="12">
    <location>
        <begin position="660"/>
        <end position="963"/>
    </location>
</feature>
<feature type="mutagenesis site" description="Decreased processing activity of the Integrator complex." evidence="6">
    <original>HGVR</original>
    <variation>AGVA</variation>
    <location>
        <begin position="164"/>
        <end position="167"/>
    </location>
</feature>
<feature type="mutagenesis site" description="Decreased processing activity of the Integrator complex." evidence="6">
    <original>R</original>
    <variation>A</variation>
    <location>
        <position position="210"/>
    </location>
</feature>
<feature type="sequence conflict" description="In Ref. 2; AAQ13616." evidence="15" ref="2">
    <original>HT</original>
    <variation>PP</variation>
    <location>
        <begin position="900"/>
        <end position="901"/>
    </location>
</feature>
<feature type="helix" evidence="30">
    <location>
        <begin position="37"/>
        <end position="45"/>
    </location>
</feature>
<feature type="turn" evidence="30">
    <location>
        <begin position="48"/>
        <end position="50"/>
    </location>
</feature>
<feature type="helix" evidence="30">
    <location>
        <begin position="51"/>
        <end position="61"/>
    </location>
</feature>
<feature type="helix" evidence="30">
    <location>
        <begin position="69"/>
        <end position="82"/>
    </location>
</feature>
<feature type="helix" evidence="30">
    <location>
        <begin position="86"/>
        <end position="98"/>
    </location>
</feature>
<feature type="helix" evidence="30">
    <location>
        <begin position="99"/>
        <end position="101"/>
    </location>
</feature>
<feature type="helix" evidence="30">
    <location>
        <begin position="107"/>
        <end position="109"/>
    </location>
</feature>
<feature type="helix" evidence="30">
    <location>
        <begin position="112"/>
        <end position="120"/>
    </location>
</feature>
<feature type="helix" evidence="30">
    <location>
        <begin position="124"/>
        <end position="140"/>
    </location>
</feature>
<feature type="helix" evidence="30">
    <location>
        <begin position="145"/>
        <end position="157"/>
    </location>
</feature>
<feature type="helix" evidence="30">
    <location>
        <begin position="158"/>
        <end position="160"/>
    </location>
</feature>
<feature type="helix" evidence="30">
    <location>
        <begin position="164"/>
        <end position="176"/>
    </location>
</feature>
<feature type="helix" evidence="30">
    <location>
        <begin position="196"/>
        <end position="201"/>
    </location>
</feature>
<feature type="helix" evidence="30">
    <location>
        <begin position="202"/>
        <end position="205"/>
    </location>
</feature>
<feature type="helix" evidence="30">
    <location>
        <begin position="209"/>
        <end position="225"/>
    </location>
</feature>
<feature type="helix" evidence="30">
    <location>
        <begin position="232"/>
        <end position="240"/>
    </location>
</feature>
<feature type="helix" evidence="30">
    <location>
        <begin position="246"/>
        <end position="262"/>
    </location>
</feature>
<feature type="strand" evidence="30">
    <location>
        <begin position="263"/>
        <end position="265"/>
    </location>
</feature>
<feature type="strand" evidence="30">
    <location>
        <begin position="267"/>
        <end position="269"/>
    </location>
</feature>
<feature type="strand" evidence="30">
    <location>
        <begin position="271"/>
        <end position="273"/>
    </location>
</feature>
<feature type="strand" evidence="30">
    <location>
        <begin position="276"/>
        <end position="278"/>
    </location>
</feature>
<feature type="helix" evidence="30">
    <location>
        <begin position="279"/>
        <end position="289"/>
    </location>
</feature>
<feature type="helix" evidence="30">
    <location>
        <begin position="290"/>
        <end position="292"/>
    </location>
</feature>
<feature type="helix" evidence="30">
    <location>
        <begin position="296"/>
        <end position="308"/>
    </location>
</feature>
<feature type="helix" evidence="30">
    <location>
        <begin position="314"/>
        <end position="319"/>
    </location>
</feature>
<feature type="helix" evidence="29">
    <location>
        <begin position="331"/>
        <end position="334"/>
    </location>
</feature>
<feature type="helix" evidence="29">
    <location>
        <begin position="336"/>
        <end position="338"/>
    </location>
</feature>
<feature type="strand" evidence="29">
    <location>
        <begin position="339"/>
        <end position="341"/>
    </location>
</feature>
<feature type="helix" evidence="30">
    <location>
        <begin position="378"/>
        <end position="383"/>
    </location>
</feature>
<feature type="helix" evidence="30">
    <location>
        <begin position="388"/>
        <end position="404"/>
    </location>
</feature>
<feature type="helix" evidence="30">
    <location>
        <begin position="406"/>
        <end position="418"/>
    </location>
</feature>
<feature type="helix" evidence="30">
    <location>
        <begin position="419"/>
        <end position="421"/>
    </location>
</feature>
<feature type="helix" evidence="30">
    <location>
        <begin position="425"/>
        <end position="437"/>
    </location>
</feature>
<feature type="helix" evidence="30">
    <location>
        <begin position="439"/>
        <end position="441"/>
    </location>
</feature>
<feature type="helix" evidence="30">
    <location>
        <begin position="446"/>
        <end position="454"/>
    </location>
</feature>
<feature type="helix" evidence="30">
    <location>
        <begin position="461"/>
        <end position="473"/>
    </location>
</feature>
<feature type="helix" evidence="30">
    <location>
        <begin position="479"/>
        <end position="495"/>
    </location>
</feature>
<feature type="helix" evidence="30">
    <location>
        <begin position="497"/>
        <end position="499"/>
    </location>
</feature>
<feature type="helix" evidence="30">
    <location>
        <begin position="500"/>
        <end position="513"/>
    </location>
</feature>
<feature type="helix" evidence="30">
    <location>
        <begin position="515"/>
        <end position="526"/>
    </location>
</feature>
<feature type="strand" evidence="30">
    <location>
        <begin position="530"/>
        <end position="532"/>
    </location>
</feature>
<feature type="helix" evidence="30">
    <location>
        <begin position="542"/>
        <end position="555"/>
    </location>
</feature>
<feature type="helix" evidence="30">
    <location>
        <begin position="560"/>
        <end position="563"/>
    </location>
</feature>
<feature type="helix" evidence="30">
    <location>
        <begin position="567"/>
        <end position="579"/>
    </location>
</feature>
<feature type="turn" evidence="30">
    <location>
        <begin position="580"/>
        <end position="583"/>
    </location>
</feature>
<feature type="strand" evidence="29">
    <location>
        <begin position="590"/>
        <end position="592"/>
    </location>
</feature>
<feature type="helix" evidence="30">
    <location>
        <begin position="609"/>
        <end position="623"/>
    </location>
</feature>
<feature type="helix" evidence="30">
    <location>
        <begin position="629"/>
        <end position="649"/>
    </location>
</feature>
<feature type="helix" evidence="30">
    <location>
        <begin position="654"/>
        <end position="679"/>
    </location>
</feature>
<feature type="helix" evidence="30">
    <location>
        <begin position="683"/>
        <end position="685"/>
    </location>
</feature>
<feature type="helix" evidence="30">
    <location>
        <begin position="693"/>
        <end position="709"/>
    </location>
</feature>
<feature type="strand" evidence="30">
    <location>
        <begin position="710"/>
        <end position="713"/>
    </location>
</feature>
<feature type="helix" evidence="30">
    <location>
        <begin position="716"/>
        <end position="740"/>
    </location>
</feature>
<feature type="helix" evidence="30">
    <location>
        <begin position="744"/>
        <end position="764"/>
    </location>
</feature>
<feature type="helix" evidence="30">
    <location>
        <begin position="766"/>
        <end position="771"/>
    </location>
</feature>
<feature type="helix" evidence="30">
    <location>
        <begin position="776"/>
        <end position="782"/>
    </location>
</feature>
<feature type="helix" evidence="30">
    <location>
        <begin position="784"/>
        <end position="789"/>
    </location>
</feature>
<feature type="helix" evidence="30">
    <location>
        <begin position="792"/>
        <end position="804"/>
    </location>
</feature>
<feature type="strand" evidence="30">
    <location>
        <begin position="821"/>
        <end position="824"/>
    </location>
</feature>
<feature type="strand" evidence="30">
    <location>
        <begin position="839"/>
        <end position="853"/>
    </location>
</feature>
<feature type="helix" evidence="30">
    <location>
        <begin position="857"/>
        <end position="860"/>
    </location>
</feature>
<feature type="strand" evidence="30">
    <location>
        <begin position="861"/>
        <end position="866"/>
    </location>
</feature>
<feature type="strand" evidence="30">
    <location>
        <begin position="868"/>
        <end position="870"/>
    </location>
</feature>
<feature type="strand" evidence="30">
    <location>
        <begin position="872"/>
        <end position="875"/>
    </location>
</feature>
<feature type="turn" evidence="30">
    <location>
        <begin position="879"/>
        <end position="881"/>
    </location>
</feature>
<feature type="strand" evidence="30">
    <location>
        <begin position="882"/>
        <end position="886"/>
    </location>
</feature>
<feature type="strand" evidence="30">
    <location>
        <begin position="889"/>
        <end position="900"/>
    </location>
</feature>
<feature type="strand" evidence="30">
    <location>
        <begin position="903"/>
        <end position="905"/>
    </location>
</feature>
<feature type="strand" evidence="30">
    <location>
        <begin position="907"/>
        <end position="916"/>
    </location>
</feature>
<feature type="strand" evidence="29">
    <location>
        <begin position="918"/>
        <end position="920"/>
    </location>
</feature>
<feature type="strand" evidence="30">
    <location>
        <begin position="945"/>
        <end position="947"/>
    </location>
</feature>
<feature type="strand" evidence="30">
    <location>
        <begin position="952"/>
        <end position="957"/>
    </location>
</feature>
<keyword id="KW-0002">3D-structure</keyword>
<keyword id="KW-0007">Acetylation</keyword>
<keyword id="KW-0025">Alternative splicing</keyword>
<keyword id="KW-0963">Cytoplasm</keyword>
<keyword id="KW-1017">Isopeptide bond</keyword>
<keyword id="KW-0539">Nucleus</keyword>
<keyword id="KW-1267">Proteomics identification</keyword>
<keyword id="KW-1185">Reference proteome</keyword>
<keyword id="KW-0677">Repeat</keyword>
<keyword id="KW-0832">Ubl conjugation</keyword>
<sequence>MAAHLKKRVYEEFTKVVQPQEEIATKKLRLTKPSKSAALHIDLCKATSPADALQYLLQFARKPVEAESVEGVVRILLEHYYKENDPSVRLKIASLLGLLSKTAGFSPDCIMDDAINILQNEKSHQVLAQLLDTLLAIGTKLPENQAIQMRLVDVACKHLTDTSHGVRNKCLQLLGNLGSLEKSVTKDAEGLAARDVQKIIGDYFSDQDPRVRTAAIKAMLQLHERGLKLHQTIYNQACKLLSDDYEQVRSAAVQLIWVVSQLYPESIVPIPSSNEEIRLVDDAFGKICHMVSDGSWVVRVQAAKLLGSMEQVSSHFLEQTLDKKLMSDLRRKRTAHERAKELYSSGEFSSGRKWGDDAPKEEVDTGAVNLIESGACGAFVHGLEDEMYEVRIAAVEALCMLAQSSPSFAEKCLDFLVDMFNDEIEEVRLQSIHTMRKISNNITLREDQLDTVLAVLEDSSRDIREALHELLCCTNVSTKEGIHLALVELLKNLTKYPTDRDSIWKCLKFLGSRHPTLVLPLVPELLSTHPFFDTAEPDMDDPAYIAVLVLIFNAAKTCPTMPALFSDHTFRHYAYLRDSLSHLVPALRLPGRKLVSSAVSPSIIPQEDPSQQFLQQSLERVYSLQHLDPQGAQELLEFTIRDLQRLGELQSELAGVADFSATYLRCQLLLIKALQEKLWNVAAPLYLKQSDLASAAAKQIMEETYKMEFMYSGVENKQVVIIHHMRLQAKALQLIVTARTTRGLDPLFGMCEKFLQEVDFFQRYFIADLPHLQDSFVDKLLDLMPRLMTSKPAEVVKILQTMLRQSAFLHLPLPEQIHKASATIIEPAGESDNPLRFTSGLVVALDVDATLEHVQDPQNTVKVQVLYPDGQAQMIHPKPADFRNPGPGRHRLITQVYLSHTAWTEACQVEVRLLLAYNSSARIPKCPWMEGGEMSPQVETSIEGTIPFSKPVKVYIMPKPARR</sequence>
<comment type="function">
    <text evidence="2 3 4 5 6 9">Component of the integrator complex, a multiprotein complex that terminates RNA polymerase II (Pol II) transcription in the promoter-proximal region of genes (PubMed:29471365, PubMed:33243860, PubMed:33548203, PubMed:38570683). The integrator complex provides a quality checkpoint during transcription elongation by driving premature transcription termination of transcripts that are unfavorably configured for transcriptional elongation: the complex terminates transcription by (1) catalyzing dephosphorylation of the C-terminal domain (CTD) of Pol II subunit POLR2A/RPB1 and SUPT5H/SPT5, (2) degrading the exiting nascent RNA transcript via endonuclease activity and (3) promoting the release of Pol II from bound DNA (PubMed:33243860, PubMed:38570683). The integrator complex is also involved in terminating the synthesis of non-coding Pol II transcripts, such as enhancer RNAs (eRNAs), small nuclear RNAs (snRNAs), telomerase RNAs and long non-coding RNAs (lncRNAs) (PubMed:16239144). Within the integrator complex, INTS4 acts as an scaffold that links INTS9 and INTS11 (PubMed:29471365, PubMed:33548203). Mediates recruitment of cytoplasmic dynein to the nuclear envelope, probably as component of the integrator complex (PubMed:23904267).</text>
</comment>
<comment type="subunit">
    <text evidence="2 4 5 6 7 8 9 10 11">Component of the Integrator complex, composed of core subunits INTS1, INTS2, INTS3, INTS4, INTS5, INTS6, INTS7, INTS8, INTS9/RC74, INTS10, INTS11/CPSF3L, INTS12, INTS13, INTS14 and INTS15 (PubMed:16239144, PubMed:29471365, PubMed:33243860, PubMed:33548203, PubMed:34762484, PubMed:38570683, PubMed:39032490). The core complex associates with protein phosphatase 2A subunits PPP2CA and PPP2R1A, to form the Integrator-PP2A (INTAC) complex (PubMed:33243860, PubMed:34762484, PubMed:36869814, PubMed:38570683). INTS4 is part of the RNA endonuclease subcomplex, composed of INTS4, INTS9, INTS11 and inositol hexakisphosphate (InsP6) (PubMed:29471365, PubMed:33548203). Interacts with BRAT1; interaction is required for the assembly of the RNA endonuclease subcomplex (PubMed:39032489).</text>
</comment>
<comment type="interaction">
    <interactant intactId="EBI-5663129">
        <id>Q96HW7</id>
    </interactant>
    <interactant intactId="EBI-740220">
        <id>O14964</id>
        <label>HGS</label>
    </interactant>
    <organismsDiffer>false</organismsDiffer>
    <experiments>4</experiments>
</comment>
<comment type="interaction">
    <interactant intactId="EBI-5663129">
        <id>Q96HW7</id>
    </interactant>
    <interactant intactId="EBI-2866634">
        <id>Q9NV88</id>
        <label>INTS9</label>
    </interactant>
    <organismsDiffer>false</organismsDiffer>
    <experiments>5</experiments>
</comment>
<comment type="interaction">
    <interactant intactId="EBI-5663129">
        <id>Q96HW7</id>
    </interactant>
    <interactant intactId="EBI-739895">
        <id>Q8N6Y0</id>
        <label>USHBP1</label>
    </interactant>
    <organismsDiffer>false</organismsDiffer>
    <experiments>3</experiments>
</comment>
<comment type="interaction">
    <interactant intactId="EBI-5663129">
        <id>Q96HW7</id>
    </interactant>
    <interactant intactId="EBI-10182121">
        <id>Q8NF64-2</id>
        <label>ZMIZ2</label>
    </interactant>
    <organismsDiffer>false</organismsDiffer>
    <experiments>3</experiments>
</comment>
<comment type="interaction">
    <interactant intactId="EBI-16438029">
        <id>Q96HW7-2</id>
    </interactant>
    <interactant intactId="EBI-740220">
        <id>O14964</id>
        <label>HGS</label>
    </interactant>
    <organismsDiffer>false</organismsDiffer>
    <experiments>3</experiments>
</comment>
<comment type="interaction">
    <interactant intactId="EBI-12240836">
        <id>Q96HW7-3</id>
    </interactant>
    <interactant intactId="EBI-12039345">
        <id>Q9UBR4-2</id>
        <label>LHX3</label>
    </interactant>
    <organismsDiffer>false</organismsDiffer>
    <experiments>3</experiments>
</comment>
<comment type="interaction">
    <interactant intactId="EBI-12240836">
        <id>Q96HW7-3</id>
    </interactant>
    <interactant intactId="EBI-18582591">
        <id>Q99687-3</id>
        <label>MEIS3</label>
    </interactant>
    <organismsDiffer>false</organismsDiffer>
    <experiments>3</experiments>
</comment>
<comment type="subcellular location">
    <subcellularLocation>
        <location evidence="3 4 10 11">Nucleus</location>
    </subcellularLocation>
    <subcellularLocation>
        <location evidence="4">Cytoplasm</location>
    </subcellularLocation>
</comment>
<comment type="alternative products">
    <event type="alternative splicing"/>
    <isoform>
        <id>Q96HW7-1</id>
        <name>1</name>
        <sequence type="displayed"/>
    </isoform>
    <isoform>
        <id>Q96HW7-2</id>
        <name>2</name>
        <sequence type="described" ref="VSP_021450"/>
    </isoform>
    <isoform>
        <id>Q96HW7-3</id>
        <name>3</name>
        <sequence type="described" ref="VSP_021448 VSP_021449 VSP_021452 VSP_021453"/>
    </isoform>
</comment>
<comment type="miscellaneous">
    <molecule>Isoform 3</molecule>
    <text evidence="15">May be produced at very low levels due to a premature stop codon in the mRNA, leading to nonsense-mediated mRNA decay.</text>
</comment>
<comment type="similarity">
    <text evidence="15">Belongs to the Integrator subunit 4 family.</text>
</comment>
<comment type="sequence caution" evidence="15">
    <conflict type="miscellaneous discrepancy">
        <sequence resource="EMBL-CDS" id="AAQ13616"/>
    </conflict>
    <text>Probable cloning artifact.</text>
</comment>